<sequence>MAAKIIDGKTIAQQVRLEVAEKVKARVAAGKRAPGLAVVLVGANPASQIYVGSKRKACEEVGFVSRSYDLPETTSEAELLALIDELNADAAIDGILVQLPLPAGIDNVKVLERIAPDKDVDGFHPYNVGRLCQRAPRLRPCTPRGIVTLLERYNIDTYGLNAVVIGASNIVGRPMSMELLLAGCTTTVTHRFTKNLRQHVENADLLIVAVGKPGFIPGEWIKEGAIVIDVGINRLENGKVVGDVVFEEAAKRASYITPVPGGVGPMTVATLIQNTLQACVEYHDGEEA</sequence>
<comment type="function">
    <text evidence="1">Catalyzes the oxidation of 5,10-methylenetetrahydrofolate to 5,10-methenyltetrahydrofolate and then the hydrolysis of 5,10-methenyltetrahydrofolate to 10-formyltetrahydrofolate.</text>
</comment>
<comment type="catalytic activity">
    <reaction evidence="1">
        <text>(6R)-5,10-methylene-5,6,7,8-tetrahydrofolate + NADP(+) = (6R)-5,10-methenyltetrahydrofolate + NADPH</text>
        <dbReference type="Rhea" id="RHEA:22812"/>
        <dbReference type="ChEBI" id="CHEBI:15636"/>
        <dbReference type="ChEBI" id="CHEBI:57455"/>
        <dbReference type="ChEBI" id="CHEBI:57783"/>
        <dbReference type="ChEBI" id="CHEBI:58349"/>
        <dbReference type="EC" id="1.5.1.5"/>
    </reaction>
</comment>
<comment type="catalytic activity">
    <reaction evidence="1">
        <text>(6R)-5,10-methenyltetrahydrofolate + H2O = (6R)-10-formyltetrahydrofolate + H(+)</text>
        <dbReference type="Rhea" id="RHEA:23700"/>
        <dbReference type="ChEBI" id="CHEBI:15377"/>
        <dbReference type="ChEBI" id="CHEBI:15378"/>
        <dbReference type="ChEBI" id="CHEBI:57455"/>
        <dbReference type="ChEBI" id="CHEBI:195366"/>
        <dbReference type="EC" id="3.5.4.9"/>
    </reaction>
</comment>
<comment type="pathway">
    <text evidence="1">One-carbon metabolism; tetrahydrofolate interconversion.</text>
</comment>
<comment type="subunit">
    <text evidence="1">Homodimer.</text>
</comment>
<comment type="similarity">
    <text evidence="1">Belongs to the tetrahydrofolate dehydrogenase/cyclohydrolase family.</text>
</comment>
<dbReference type="EC" id="1.5.1.5" evidence="1"/>
<dbReference type="EC" id="3.5.4.9" evidence="1"/>
<dbReference type="EMBL" id="CP000783">
    <property type="protein sequence ID" value="ABU77987.1"/>
    <property type="molecule type" value="Genomic_DNA"/>
</dbReference>
<dbReference type="RefSeq" id="WP_012125417.1">
    <property type="nucleotide sequence ID" value="NC_009778.1"/>
</dbReference>
<dbReference type="SMR" id="A7MJZ6"/>
<dbReference type="KEGG" id="esa:ESA_02756"/>
<dbReference type="PATRIC" id="fig|290339.8.peg.2452"/>
<dbReference type="HOGENOM" id="CLU_034045_2_1_6"/>
<dbReference type="UniPathway" id="UPA00193"/>
<dbReference type="Proteomes" id="UP000000260">
    <property type="component" value="Chromosome"/>
</dbReference>
<dbReference type="GO" id="GO:0005829">
    <property type="term" value="C:cytosol"/>
    <property type="evidence" value="ECO:0007669"/>
    <property type="project" value="TreeGrafter"/>
</dbReference>
<dbReference type="GO" id="GO:0004477">
    <property type="term" value="F:methenyltetrahydrofolate cyclohydrolase activity"/>
    <property type="evidence" value="ECO:0007669"/>
    <property type="project" value="UniProtKB-UniRule"/>
</dbReference>
<dbReference type="GO" id="GO:0004488">
    <property type="term" value="F:methylenetetrahydrofolate dehydrogenase (NADP+) activity"/>
    <property type="evidence" value="ECO:0007669"/>
    <property type="project" value="UniProtKB-UniRule"/>
</dbReference>
<dbReference type="GO" id="GO:0000105">
    <property type="term" value="P:L-histidine biosynthetic process"/>
    <property type="evidence" value="ECO:0007669"/>
    <property type="project" value="UniProtKB-KW"/>
</dbReference>
<dbReference type="GO" id="GO:0009086">
    <property type="term" value="P:methionine biosynthetic process"/>
    <property type="evidence" value="ECO:0007669"/>
    <property type="project" value="UniProtKB-KW"/>
</dbReference>
<dbReference type="GO" id="GO:0006164">
    <property type="term" value="P:purine nucleotide biosynthetic process"/>
    <property type="evidence" value="ECO:0007669"/>
    <property type="project" value="UniProtKB-KW"/>
</dbReference>
<dbReference type="GO" id="GO:0035999">
    <property type="term" value="P:tetrahydrofolate interconversion"/>
    <property type="evidence" value="ECO:0007669"/>
    <property type="project" value="UniProtKB-UniRule"/>
</dbReference>
<dbReference type="CDD" id="cd01080">
    <property type="entry name" value="NAD_bind_m-THF_DH_Cyclohyd"/>
    <property type="match status" value="1"/>
</dbReference>
<dbReference type="FunFam" id="3.40.50.10860:FF:000001">
    <property type="entry name" value="Bifunctional protein FolD"/>
    <property type="match status" value="1"/>
</dbReference>
<dbReference type="FunFam" id="3.40.50.720:FF:000006">
    <property type="entry name" value="Bifunctional protein FolD"/>
    <property type="match status" value="1"/>
</dbReference>
<dbReference type="Gene3D" id="3.40.50.10860">
    <property type="entry name" value="Leucine Dehydrogenase, chain A, domain 1"/>
    <property type="match status" value="1"/>
</dbReference>
<dbReference type="Gene3D" id="3.40.50.720">
    <property type="entry name" value="NAD(P)-binding Rossmann-like Domain"/>
    <property type="match status" value="1"/>
</dbReference>
<dbReference type="HAMAP" id="MF_01576">
    <property type="entry name" value="THF_DHG_CYH"/>
    <property type="match status" value="1"/>
</dbReference>
<dbReference type="InterPro" id="IPR046346">
    <property type="entry name" value="Aminoacid_DH-like_N_sf"/>
</dbReference>
<dbReference type="InterPro" id="IPR036291">
    <property type="entry name" value="NAD(P)-bd_dom_sf"/>
</dbReference>
<dbReference type="InterPro" id="IPR000672">
    <property type="entry name" value="THF_DH/CycHdrlase"/>
</dbReference>
<dbReference type="InterPro" id="IPR020630">
    <property type="entry name" value="THF_DH/CycHdrlase_cat_dom"/>
</dbReference>
<dbReference type="InterPro" id="IPR020867">
    <property type="entry name" value="THF_DH/CycHdrlase_CS"/>
</dbReference>
<dbReference type="InterPro" id="IPR020631">
    <property type="entry name" value="THF_DH/CycHdrlase_NAD-bd_dom"/>
</dbReference>
<dbReference type="NCBIfam" id="NF008058">
    <property type="entry name" value="PRK10792.1"/>
    <property type="match status" value="1"/>
</dbReference>
<dbReference type="NCBIfam" id="NF010783">
    <property type="entry name" value="PRK14186.1"/>
    <property type="match status" value="1"/>
</dbReference>
<dbReference type="PANTHER" id="PTHR48099:SF5">
    <property type="entry name" value="C-1-TETRAHYDROFOLATE SYNTHASE, CYTOPLASMIC"/>
    <property type="match status" value="1"/>
</dbReference>
<dbReference type="PANTHER" id="PTHR48099">
    <property type="entry name" value="C-1-TETRAHYDROFOLATE SYNTHASE, CYTOPLASMIC-RELATED"/>
    <property type="match status" value="1"/>
</dbReference>
<dbReference type="Pfam" id="PF00763">
    <property type="entry name" value="THF_DHG_CYH"/>
    <property type="match status" value="1"/>
</dbReference>
<dbReference type="Pfam" id="PF02882">
    <property type="entry name" value="THF_DHG_CYH_C"/>
    <property type="match status" value="1"/>
</dbReference>
<dbReference type="PRINTS" id="PR00085">
    <property type="entry name" value="THFDHDRGNASE"/>
</dbReference>
<dbReference type="SUPFAM" id="SSF53223">
    <property type="entry name" value="Aminoacid dehydrogenase-like, N-terminal domain"/>
    <property type="match status" value="1"/>
</dbReference>
<dbReference type="SUPFAM" id="SSF51735">
    <property type="entry name" value="NAD(P)-binding Rossmann-fold domains"/>
    <property type="match status" value="1"/>
</dbReference>
<dbReference type="PROSITE" id="PS00766">
    <property type="entry name" value="THF_DHG_CYH_1"/>
    <property type="match status" value="1"/>
</dbReference>
<dbReference type="PROSITE" id="PS00767">
    <property type="entry name" value="THF_DHG_CYH_2"/>
    <property type="match status" value="1"/>
</dbReference>
<proteinExistence type="inferred from homology"/>
<protein>
    <recommendedName>
        <fullName evidence="1">Bifunctional protein FolD</fullName>
    </recommendedName>
    <domain>
        <recommendedName>
            <fullName evidence="1">Methylenetetrahydrofolate dehydrogenase</fullName>
            <ecNumber evidence="1">1.5.1.5</ecNumber>
        </recommendedName>
    </domain>
    <domain>
        <recommendedName>
            <fullName evidence="1">Methenyltetrahydrofolate cyclohydrolase</fullName>
            <ecNumber evidence="1">3.5.4.9</ecNumber>
        </recommendedName>
    </domain>
</protein>
<keyword id="KW-0028">Amino-acid biosynthesis</keyword>
<keyword id="KW-0368">Histidine biosynthesis</keyword>
<keyword id="KW-0378">Hydrolase</keyword>
<keyword id="KW-0486">Methionine biosynthesis</keyword>
<keyword id="KW-0511">Multifunctional enzyme</keyword>
<keyword id="KW-0521">NADP</keyword>
<keyword id="KW-0554">One-carbon metabolism</keyword>
<keyword id="KW-0560">Oxidoreductase</keyword>
<keyword id="KW-0658">Purine biosynthesis</keyword>
<keyword id="KW-1185">Reference proteome</keyword>
<evidence type="ECO:0000255" key="1">
    <source>
        <dbReference type="HAMAP-Rule" id="MF_01576"/>
    </source>
</evidence>
<reference key="1">
    <citation type="journal article" date="2010" name="PLoS ONE">
        <title>Genome sequence of Cronobacter sakazakii BAA-894 and comparative genomic hybridization analysis with other Cronobacter species.</title>
        <authorList>
            <person name="Kucerova E."/>
            <person name="Clifton S.W."/>
            <person name="Xia X.Q."/>
            <person name="Long F."/>
            <person name="Porwollik S."/>
            <person name="Fulton L."/>
            <person name="Fronick C."/>
            <person name="Minx P."/>
            <person name="Kyung K."/>
            <person name="Warren W."/>
            <person name="Fulton R."/>
            <person name="Feng D."/>
            <person name="Wollam A."/>
            <person name="Shah N."/>
            <person name="Bhonagiri V."/>
            <person name="Nash W.E."/>
            <person name="Hallsworth-Pepin K."/>
            <person name="Wilson R.K."/>
            <person name="McClelland M."/>
            <person name="Forsythe S.J."/>
        </authorList>
    </citation>
    <scope>NUCLEOTIDE SEQUENCE [LARGE SCALE GENOMIC DNA]</scope>
    <source>
        <strain>ATCC BAA-894</strain>
    </source>
</reference>
<name>FOLD_CROS8</name>
<organism>
    <name type="scientific">Cronobacter sakazakii (strain ATCC BAA-894)</name>
    <name type="common">Enterobacter sakazakii</name>
    <dbReference type="NCBI Taxonomy" id="290339"/>
    <lineage>
        <taxon>Bacteria</taxon>
        <taxon>Pseudomonadati</taxon>
        <taxon>Pseudomonadota</taxon>
        <taxon>Gammaproteobacteria</taxon>
        <taxon>Enterobacterales</taxon>
        <taxon>Enterobacteriaceae</taxon>
        <taxon>Cronobacter</taxon>
    </lineage>
</organism>
<gene>
    <name evidence="1" type="primary">folD</name>
    <name type="ordered locus">ESA_02756</name>
</gene>
<accession>A7MJZ6</accession>
<feature type="chain" id="PRO_1000069243" description="Bifunctional protein FolD">
    <location>
        <begin position="1"/>
        <end position="288"/>
    </location>
</feature>
<feature type="binding site" evidence="1">
    <location>
        <begin position="166"/>
        <end position="168"/>
    </location>
    <ligand>
        <name>NADP(+)</name>
        <dbReference type="ChEBI" id="CHEBI:58349"/>
    </ligand>
</feature>
<feature type="binding site" evidence="1">
    <location>
        <position position="232"/>
    </location>
    <ligand>
        <name>NADP(+)</name>
        <dbReference type="ChEBI" id="CHEBI:58349"/>
    </ligand>
</feature>